<gene>
    <name evidence="1" type="primary">tyrS</name>
    <name type="ordered locus">SSP1034</name>
</gene>
<protein>
    <recommendedName>
        <fullName evidence="1">Tyrosine--tRNA ligase</fullName>
        <ecNumber evidence="1">6.1.1.1</ecNumber>
    </recommendedName>
    <alternativeName>
        <fullName evidence="1">Tyrosyl-tRNA synthetase</fullName>
        <shortName evidence="1">TyrRS</shortName>
    </alternativeName>
</protein>
<name>SYY_STAS1</name>
<accession>Q49YG2</accession>
<reference key="1">
    <citation type="journal article" date="2005" name="Proc. Natl. Acad. Sci. U.S.A.">
        <title>Whole genome sequence of Staphylococcus saprophyticus reveals the pathogenesis of uncomplicated urinary tract infection.</title>
        <authorList>
            <person name="Kuroda M."/>
            <person name="Yamashita A."/>
            <person name="Hirakawa H."/>
            <person name="Kumano M."/>
            <person name="Morikawa K."/>
            <person name="Higashide M."/>
            <person name="Maruyama A."/>
            <person name="Inose Y."/>
            <person name="Matoba K."/>
            <person name="Toh H."/>
            <person name="Kuhara S."/>
            <person name="Hattori M."/>
            <person name="Ohta T."/>
        </authorList>
    </citation>
    <scope>NUCLEOTIDE SEQUENCE [LARGE SCALE GENOMIC DNA]</scope>
    <source>
        <strain>ATCC 15305 / DSM 20229 / NCIMB 8711 / NCTC 7292 / S-41</strain>
    </source>
</reference>
<proteinExistence type="inferred from homology"/>
<dbReference type="EC" id="6.1.1.1" evidence="1"/>
<dbReference type="EMBL" id="AP008934">
    <property type="protein sequence ID" value="BAE18179.1"/>
    <property type="molecule type" value="Genomic_DNA"/>
</dbReference>
<dbReference type="RefSeq" id="WP_011302879.1">
    <property type="nucleotide sequence ID" value="NZ_MTGA01000033.1"/>
</dbReference>
<dbReference type="SMR" id="Q49YG2"/>
<dbReference type="GeneID" id="3615728"/>
<dbReference type="KEGG" id="ssp:SSP1034"/>
<dbReference type="PATRIC" id="fig|342451.11.peg.1033"/>
<dbReference type="eggNOG" id="COG0162">
    <property type="taxonomic scope" value="Bacteria"/>
</dbReference>
<dbReference type="HOGENOM" id="CLU_024003_0_3_9"/>
<dbReference type="OrthoDB" id="9804243at2"/>
<dbReference type="Proteomes" id="UP000006371">
    <property type="component" value="Chromosome"/>
</dbReference>
<dbReference type="GO" id="GO:0005829">
    <property type="term" value="C:cytosol"/>
    <property type="evidence" value="ECO:0007669"/>
    <property type="project" value="TreeGrafter"/>
</dbReference>
<dbReference type="GO" id="GO:0005524">
    <property type="term" value="F:ATP binding"/>
    <property type="evidence" value="ECO:0007669"/>
    <property type="project" value="UniProtKB-UniRule"/>
</dbReference>
<dbReference type="GO" id="GO:0003723">
    <property type="term" value="F:RNA binding"/>
    <property type="evidence" value="ECO:0007669"/>
    <property type="project" value="UniProtKB-KW"/>
</dbReference>
<dbReference type="GO" id="GO:0004831">
    <property type="term" value="F:tyrosine-tRNA ligase activity"/>
    <property type="evidence" value="ECO:0007669"/>
    <property type="project" value="UniProtKB-UniRule"/>
</dbReference>
<dbReference type="GO" id="GO:0006437">
    <property type="term" value="P:tyrosyl-tRNA aminoacylation"/>
    <property type="evidence" value="ECO:0007669"/>
    <property type="project" value="UniProtKB-UniRule"/>
</dbReference>
<dbReference type="CDD" id="cd00165">
    <property type="entry name" value="S4"/>
    <property type="match status" value="1"/>
</dbReference>
<dbReference type="CDD" id="cd00395">
    <property type="entry name" value="Tyr_Trp_RS_core"/>
    <property type="match status" value="1"/>
</dbReference>
<dbReference type="FunFam" id="1.10.240.10:FF:000001">
    <property type="entry name" value="Tyrosine--tRNA ligase"/>
    <property type="match status" value="1"/>
</dbReference>
<dbReference type="FunFam" id="3.40.50.620:FF:000008">
    <property type="entry name" value="Tyrosine--tRNA ligase"/>
    <property type="match status" value="1"/>
</dbReference>
<dbReference type="Gene3D" id="3.40.50.620">
    <property type="entry name" value="HUPs"/>
    <property type="match status" value="1"/>
</dbReference>
<dbReference type="Gene3D" id="3.10.290.10">
    <property type="entry name" value="RNA-binding S4 domain"/>
    <property type="match status" value="1"/>
</dbReference>
<dbReference type="Gene3D" id="1.10.240.10">
    <property type="entry name" value="Tyrosyl-Transfer RNA Synthetase"/>
    <property type="match status" value="1"/>
</dbReference>
<dbReference type="HAMAP" id="MF_02006">
    <property type="entry name" value="Tyr_tRNA_synth_type1"/>
    <property type="match status" value="1"/>
</dbReference>
<dbReference type="InterPro" id="IPR001412">
    <property type="entry name" value="aa-tRNA-synth_I_CS"/>
</dbReference>
<dbReference type="InterPro" id="IPR002305">
    <property type="entry name" value="aa-tRNA-synth_Ic"/>
</dbReference>
<dbReference type="InterPro" id="IPR014729">
    <property type="entry name" value="Rossmann-like_a/b/a_fold"/>
</dbReference>
<dbReference type="InterPro" id="IPR002942">
    <property type="entry name" value="S4_RNA-bd"/>
</dbReference>
<dbReference type="InterPro" id="IPR036986">
    <property type="entry name" value="S4_RNA-bd_sf"/>
</dbReference>
<dbReference type="InterPro" id="IPR054608">
    <property type="entry name" value="SYY-like_C"/>
</dbReference>
<dbReference type="InterPro" id="IPR002307">
    <property type="entry name" value="Tyr-tRNA-ligase"/>
</dbReference>
<dbReference type="InterPro" id="IPR024088">
    <property type="entry name" value="Tyr-tRNA-ligase_bac-type"/>
</dbReference>
<dbReference type="InterPro" id="IPR024107">
    <property type="entry name" value="Tyr-tRNA-ligase_bac_1"/>
</dbReference>
<dbReference type="NCBIfam" id="TIGR00234">
    <property type="entry name" value="tyrS"/>
    <property type="match status" value="1"/>
</dbReference>
<dbReference type="PANTHER" id="PTHR11766:SF0">
    <property type="entry name" value="TYROSINE--TRNA LIGASE, MITOCHONDRIAL"/>
    <property type="match status" value="1"/>
</dbReference>
<dbReference type="PANTHER" id="PTHR11766">
    <property type="entry name" value="TYROSYL-TRNA SYNTHETASE"/>
    <property type="match status" value="1"/>
</dbReference>
<dbReference type="Pfam" id="PF22421">
    <property type="entry name" value="SYY_C-terminal"/>
    <property type="match status" value="1"/>
</dbReference>
<dbReference type="Pfam" id="PF00579">
    <property type="entry name" value="tRNA-synt_1b"/>
    <property type="match status" value="1"/>
</dbReference>
<dbReference type="PRINTS" id="PR01040">
    <property type="entry name" value="TRNASYNTHTYR"/>
</dbReference>
<dbReference type="SMART" id="SM00363">
    <property type="entry name" value="S4"/>
    <property type="match status" value="1"/>
</dbReference>
<dbReference type="SUPFAM" id="SSF55174">
    <property type="entry name" value="Alpha-L RNA-binding motif"/>
    <property type="match status" value="1"/>
</dbReference>
<dbReference type="SUPFAM" id="SSF52374">
    <property type="entry name" value="Nucleotidylyl transferase"/>
    <property type="match status" value="1"/>
</dbReference>
<dbReference type="PROSITE" id="PS00178">
    <property type="entry name" value="AA_TRNA_LIGASE_I"/>
    <property type="match status" value="1"/>
</dbReference>
<dbReference type="PROSITE" id="PS50889">
    <property type="entry name" value="S4"/>
    <property type="match status" value="1"/>
</dbReference>
<evidence type="ECO:0000255" key="1">
    <source>
        <dbReference type="HAMAP-Rule" id="MF_02006"/>
    </source>
</evidence>
<sequence length="420" mass="47615">MTNALLEDLKWRGLIYQQTDESGIENILNKEQVTLYCGADPTADSLHIGHLLPFLTLRRFQEHGHRPLVLIGGGTGMIGDPSGKSEERTLQTEAQVETNVQGINKQMHKIFEFDTEKGAKLVNNKDWLGQISLIDFLRDYGKHVGVNYMLGKDSIQTRLEHGISYTEFTYTILQAIDFGHLNRTYNCKVQVGGSDQWGNITSGIELMRRMYGQTEAYGLTIPLVVKSDGKKFGKTEGGAVWLDAAKTSPYEFYQFWINTTDDDVIKFLKYFTFLEQEEIEALEKSLNEAPHLREAQKALAENVTRFIHGQDALDDAIRISQALFAGDLQSLSASELKEGFKDVPQVELSSETRNIVEVIVETGISSSKRQAREDVNNGAIYINGIRQQDVNYELTSEDKIENEFTIIRRGKKKYFMVNYK</sequence>
<organism>
    <name type="scientific">Staphylococcus saprophyticus subsp. saprophyticus (strain ATCC 15305 / DSM 20229 / NCIMB 8711 / NCTC 7292 / S-41)</name>
    <dbReference type="NCBI Taxonomy" id="342451"/>
    <lineage>
        <taxon>Bacteria</taxon>
        <taxon>Bacillati</taxon>
        <taxon>Bacillota</taxon>
        <taxon>Bacilli</taxon>
        <taxon>Bacillales</taxon>
        <taxon>Staphylococcaceae</taxon>
        <taxon>Staphylococcus</taxon>
    </lineage>
</organism>
<comment type="function">
    <text evidence="1">Catalyzes the attachment of tyrosine to tRNA(Tyr) in a two-step reaction: tyrosine is first activated by ATP to form Tyr-AMP and then transferred to the acceptor end of tRNA(Tyr).</text>
</comment>
<comment type="catalytic activity">
    <reaction evidence="1">
        <text>tRNA(Tyr) + L-tyrosine + ATP = L-tyrosyl-tRNA(Tyr) + AMP + diphosphate + H(+)</text>
        <dbReference type="Rhea" id="RHEA:10220"/>
        <dbReference type="Rhea" id="RHEA-COMP:9706"/>
        <dbReference type="Rhea" id="RHEA-COMP:9707"/>
        <dbReference type="ChEBI" id="CHEBI:15378"/>
        <dbReference type="ChEBI" id="CHEBI:30616"/>
        <dbReference type="ChEBI" id="CHEBI:33019"/>
        <dbReference type="ChEBI" id="CHEBI:58315"/>
        <dbReference type="ChEBI" id="CHEBI:78442"/>
        <dbReference type="ChEBI" id="CHEBI:78536"/>
        <dbReference type="ChEBI" id="CHEBI:456215"/>
        <dbReference type="EC" id="6.1.1.1"/>
    </reaction>
</comment>
<comment type="subunit">
    <text evidence="1">Homodimer.</text>
</comment>
<comment type="subcellular location">
    <subcellularLocation>
        <location evidence="1">Cytoplasm</location>
    </subcellularLocation>
</comment>
<comment type="similarity">
    <text evidence="1">Belongs to the class-I aminoacyl-tRNA synthetase family. TyrS type 1 subfamily.</text>
</comment>
<keyword id="KW-0030">Aminoacyl-tRNA synthetase</keyword>
<keyword id="KW-0067">ATP-binding</keyword>
<keyword id="KW-0963">Cytoplasm</keyword>
<keyword id="KW-0436">Ligase</keyword>
<keyword id="KW-0547">Nucleotide-binding</keyword>
<keyword id="KW-0648">Protein biosynthesis</keyword>
<keyword id="KW-1185">Reference proteome</keyword>
<keyword id="KW-0694">RNA-binding</keyword>
<feature type="chain" id="PRO_0000234783" description="Tyrosine--tRNA ligase">
    <location>
        <begin position="1"/>
        <end position="420"/>
    </location>
</feature>
<feature type="domain" description="S4 RNA-binding" evidence="1">
    <location>
        <begin position="353"/>
        <end position="420"/>
    </location>
</feature>
<feature type="short sequence motif" description="'HIGH' region">
    <location>
        <begin position="41"/>
        <end position="50"/>
    </location>
</feature>
<feature type="short sequence motif" description="'KMSKS' region">
    <location>
        <begin position="231"/>
        <end position="235"/>
    </location>
</feature>
<feature type="binding site" evidence="1">
    <location>
        <position position="36"/>
    </location>
    <ligand>
        <name>L-tyrosine</name>
        <dbReference type="ChEBI" id="CHEBI:58315"/>
    </ligand>
</feature>
<feature type="binding site" evidence="1">
    <location>
        <position position="170"/>
    </location>
    <ligand>
        <name>L-tyrosine</name>
        <dbReference type="ChEBI" id="CHEBI:58315"/>
    </ligand>
</feature>
<feature type="binding site" evidence="1">
    <location>
        <position position="174"/>
    </location>
    <ligand>
        <name>L-tyrosine</name>
        <dbReference type="ChEBI" id="CHEBI:58315"/>
    </ligand>
</feature>
<feature type="binding site" evidence="1">
    <location>
        <position position="234"/>
    </location>
    <ligand>
        <name>ATP</name>
        <dbReference type="ChEBI" id="CHEBI:30616"/>
    </ligand>
</feature>